<feature type="chain" id="PRO_0000190910" description="Tetraacyldisaccharide 4'-kinase">
    <location>
        <begin position="1"/>
        <end position="347"/>
    </location>
</feature>
<feature type="binding site" evidence="1">
    <location>
        <begin position="64"/>
        <end position="71"/>
    </location>
    <ligand>
        <name>ATP</name>
        <dbReference type="ChEBI" id="CHEBI:30616"/>
    </ligand>
</feature>
<keyword id="KW-0067">ATP-binding</keyword>
<keyword id="KW-0418">Kinase</keyword>
<keyword id="KW-0441">Lipid A biosynthesis</keyword>
<keyword id="KW-0444">Lipid biosynthesis</keyword>
<keyword id="KW-0443">Lipid metabolism</keyword>
<keyword id="KW-0547">Nucleotide-binding</keyword>
<keyword id="KW-0808">Transferase</keyword>
<organism>
    <name type="scientific">Bordetella bronchiseptica (strain ATCC BAA-588 / NCTC 13252 / RB50)</name>
    <name type="common">Alcaligenes bronchisepticus</name>
    <dbReference type="NCBI Taxonomy" id="257310"/>
    <lineage>
        <taxon>Bacteria</taxon>
        <taxon>Pseudomonadati</taxon>
        <taxon>Pseudomonadota</taxon>
        <taxon>Betaproteobacteria</taxon>
        <taxon>Burkholderiales</taxon>
        <taxon>Alcaligenaceae</taxon>
        <taxon>Bordetella</taxon>
    </lineage>
</organism>
<protein>
    <recommendedName>
        <fullName evidence="1">Tetraacyldisaccharide 4'-kinase</fullName>
        <ecNumber evidence="1">2.7.1.130</ecNumber>
    </recommendedName>
    <alternativeName>
        <fullName evidence="1">Lipid A 4'-kinase</fullName>
    </alternativeName>
</protein>
<sequence length="347" mass="36708">MNAPRCLRRLLERQWRQGGWLSTLLRPLAALTGLVVARKRNAYLTGARAAWRAPVPVVVVGNIYVGGTGKTPVVIEVVRQLQARGWTPGVVSRGYGVDVGAAPRVGQGQLAAADYGDEPALIARATGAAIAVHPHRPRAVQALLRAHPGVDVVVSDDGLQHLALARDVEIVVQDERGVGNGRLLPAGPLREPAQRLADVDAIVTNAGRPRAAAAPAAGAPRQLAMWLEPTHAQRVTDGATRTLADLAALPPARLAAAAGIGNPARFFQTLEQAGIRPAHTLALPDHYAYAQSPFTALDADLILVTAKDAIKCAALDDPRLWAVQVGTRLSDPDFGDWLSATLRARQP</sequence>
<accession>Q7WKU5</accession>
<dbReference type="EC" id="2.7.1.130" evidence="1"/>
<dbReference type="EMBL" id="BX640443">
    <property type="protein sequence ID" value="CAE32505.1"/>
    <property type="molecule type" value="Genomic_DNA"/>
</dbReference>
<dbReference type="RefSeq" id="WP_003812892.1">
    <property type="nucleotide sequence ID" value="NC_002927.3"/>
</dbReference>
<dbReference type="SMR" id="Q7WKU5"/>
<dbReference type="GeneID" id="93204350"/>
<dbReference type="KEGG" id="bbr:BB2008"/>
<dbReference type="eggNOG" id="COG1663">
    <property type="taxonomic scope" value="Bacteria"/>
</dbReference>
<dbReference type="HOGENOM" id="CLU_038816_2_0_4"/>
<dbReference type="UniPathway" id="UPA00359">
    <property type="reaction ID" value="UER00482"/>
</dbReference>
<dbReference type="Proteomes" id="UP000001027">
    <property type="component" value="Chromosome"/>
</dbReference>
<dbReference type="GO" id="GO:0005886">
    <property type="term" value="C:plasma membrane"/>
    <property type="evidence" value="ECO:0007669"/>
    <property type="project" value="TreeGrafter"/>
</dbReference>
<dbReference type="GO" id="GO:0005524">
    <property type="term" value="F:ATP binding"/>
    <property type="evidence" value="ECO:0007669"/>
    <property type="project" value="UniProtKB-UniRule"/>
</dbReference>
<dbReference type="GO" id="GO:0009029">
    <property type="term" value="F:tetraacyldisaccharide 4'-kinase activity"/>
    <property type="evidence" value="ECO:0007669"/>
    <property type="project" value="UniProtKB-UniRule"/>
</dbReference>
<dbReference type="GO" id="GO:0009245">
    <property type="term" value="P:lipid A biosynthetic process"/>
    <property type="evidence" value="ECO:0007669"/>
    <property type="project" value="UniProtKB-UniRule"/>
</dbReference>
<dbReference type="GO" id="GO:0009244">
    <property type="term" value="P:lipopolysaccharide core region biosynthetic process"/>
    <property type="evidence" value="ECO:0007669"/>
    <property type="project" value="TreeGrafter"/>
</dbReference>
<dbReference type="HAMAP" id="MF_00409">
    <property type="entry name" value="LpxK"/>
    <property type="match status" value="1"/>
</dbReference>
<dbReference type="InterPro" id="IPR003758">
    <property type="entry name" value="LpxK"/>
</dbReference>
<dbReference type="InterPro" id="IPR027417">
    <property type="entry name" value="P-loop_NTPase"/>
</dbReference>
<dbReference type="NCBIfam" id="TIGR00682">
    <property type="entry name" value="lpxK"/>
    <property type="match status" value="1"/>
</dbReference>
<dbReference type="PANTHER" id="PTHR42724">
    <property type="entry name" value="TETRAACYLDISACCHARIDE 4'-KINASE"/>
    <property type="match status" value="1"/>
</dbReference>
<dbReference type="PANTHER" id="PTHR42724:SF1">
    <property type="entry name" value="TETRAACYLDISACCHARIDE 4'-KINASE, MITOCHONDRIAL-RELATED"/>
    <property type="match status" value="1"/>
</dbReference>
<dbReference type="Pfam" id="PF02606">
    <property type="entry name" value="LpxK"/>
    <property type="match status" value="1"/>
</dbReference>
<dbReference type="SUPFAM" id="SSF52540">
    <property type="entry name" value="P-loop containing nucleoside triphosphate hydrolases"/>
    <property type="match status" value="1"/>
</dbReference>
<comment type="function">
    <text evidence="1">Transfers the gamma-phosphate of ATP to the 4'-position of a tetraacyldisaccharide 1-phosphate intermediate (termed DS-1-P) to form tetraacyldisaccharide 1,4'-bis-phosphate (lipid IVA).</text>
</comment>
<comment type="catalytic activity">
    <reaction evidence="1">
        <text>a lipid A disaccharide + ATP = a lipid IVA + ADP + H(+)</text>
        <dbReference type="Rhea" id="RHEA:67840"/>
        <dbReference type="ChEBI" id="CHEBI:15378"/>
        <dbReference type="ChEBI" id="CHEBI:30616"/>
        <dbReference type="ChEBI" id="CHEBI:176343"/>
        <dbReference type="ChEBI" id="CHEBI:176425"/>
        <dbReference type="ChEBI" id="CHEBI:456216"/>
        <dbReference type="EC" id="2.7.1.130"/>
    </reaction>
</comment>
<comment type="pathway">
    <text evidence="1">Glycolipid biosynthesis; lipid IV(A) biosynthesis; lipid IV(A) from (3R)-3-hydroxytetradecanoyl-[acyl-carrier-protein] and UDP-N-acetyl-alpha-D-glucosamine: step 6/6.</text>
</comment>
<comment type="similarity">
    <text evidence="1">Belongs to the LpxK family.</text>
</comment>
<gene>
    <name evidence="1" type="primary">lpxK</name>
    <name type="ordered locus">BB2008</name>
</gene>
<proteinExistence type="inferred from homology"/>
<reference key="1">
    <citation type="journal article" date="2003" name="Nat. Genet.">
        <title>Comparative analysis of the genome sequences of Bordetella pertussis, Bordetella parapertussis and Bordetella bronchiseptica.</title>
        <authorList>
            <person name="Parkhill J."/>
            <person name="Sebaihia M."/>
            <person name="Preston A."/>
            <person name="Murphy L.D."/>
            <person name="Thomson N.R."/>
            <person name="Harris D.E."/>
            <person name="Holden M.T.G."/>
            <person name="Churcher C.M."/>
            <person name="Bentley S.D."/>
            <person name="Mungall K.L."/>
            <person name="Cerdeno-Tarraga A.-M."/>
            <person name="Temple L."/>
            <person name="James K.D."/>
            <person name="Harris B."/>
            <person name="Quail M.A."/>
            <person name="Achtman M."/>
            <person name="Atkin R."/>
            <person name="Baker S."/>
            <person name="Basham D."/>
            <person name="Bason N."/>
            <person name="Cherevach I."/>
            <person name="Chillingworth T."/>
            <person name="Collins M."/>
            <person name="Cronin A."/>
            <person name="Davis P."/>
            <person name="Doggett J."/>
            <person name="Feltwell T."/>
            <person name="Goble A."/>
            <person name="Hamlin N."/>
            <person name="Hauser H."/>
            <person name="Holroyd S."/>
            <person name="Jagels K."/>
            <person name="Leather S."/>
            <person name="Moule S."/>
            <person name="Norberczak H."/>
            <person name="O'Neil S."/>
            <person name="Ormond D."/>
            <person name="Price C."/>
            <person name="Rabbinowitsch E."/>
            <person name="Rutter S."/>
            <person name="Sanders M."/>
            <person name="Saunders D."/>
            <person name="Seeger K."/>
            <person name="Sharp S."/>
            <person name="Simmonds M."/>
            <person name="Skelton J."/>
            <person name="Squares R."/>
            <person name="Squares S."/>
            <person name="Stevens K."/>
            <person name="Unwin L."/>
            <person name="Whitehead S."/>
            <person name="Barrell B.G."/>
            <person name="Maskell D.J."/>
        </authorList>
    </citation>
    <scope>NUCLEOTIDE SEQUENCE [LARGE SCALE GENOMIC DNA]</scope>
    <source>
        <strain>ATCC BAA-588 / NCTC 13252 / RB50</strain>
    </source>
</reference>
<evidence type="ECO:0000255" key="1">
    <source>
        <dbReference type="HAMAP-Rule" id="MF_00409"/>
    </source>
</evidence>
<name>LPXK_BORBR</name>